<feature type="chain" id="PRO_0000188470" description="Glycerol-3-phosphate acyltransferase">
    <location>
        <begin position="1"/>
        <end position="213"/>
    </location>
</feature>
<feature type="transmembrane region" description="Helical" evidence="1">
    <location>
        <begin position="3"/>
        <end position="23"/>
    </location>
</feature>
<feature type="transmembrane region" description="Helical" evidence="1">
    <location>
        <begin position="68"/>
        <end position="88"/>
    </location>
</feature>
<feature type="transmembrane region" description="Helical" evidence="1">
    <location>
        <begin position="112"/>
        <end position="132"/>
    </location>
</feature>
<feature type="transmembrane region" description="Helical" evidence="1">
    <location>
        <begin position="134"/>
        <end position="154"/>
    </location>
</feature>
<feature type="transmembrane region" description="Helical" evidence="1">
    <location>
        <begin position="163"/>
        <end position="183"/>
    </location>
</feature>
<name>PLSY_STRP6</name>
<comment type="function">
    <text evidence="1">Catalyzes the transfer of an acyl group from acyl-phosphate (acyl-PO(4)) to glycerol-3-phosphate (G3P) to form lysophosphatidic acid (LPA). This enzyme utilizes acyl-phosphate as fatty acyl donor, but not acyl-CoA or acyl-ACP.</text>
</comment>
<comment type="catalytic activity">
    <reaction evidence="1">
        <text>an acyl phosphate + sn-glycerol 3-phosphate = a 1-acyl-sn-glycero-3-phosphate + phosphate</text>
        <dbReference type="Rhea" id="RHEA:34075"/>
        <dbReference type="ChEBI" id="CHEBI:43474"/>
        <dbReference type="ChEBI" id="CHEBI:57597"/>
        <dbReference type="ChEBI" id="CHEBI:57970"/>
        <dbReference type="ChEBI" id="CHEBI:59918"/>
        <dbReference type="EC" id="2.3.1.275"/>
    </reaction>
</comment>
<comment type="pathway">
    <text evidence="1">Lipid metabolism; phospholipid metabolism.</text>
</comment>
<comment type="subunit">
    <text evidence="1">Probably interacts with PlsX.</text>
</comment>
<comment type="subcellular location">
    <subcellularLocation>
        <location evidence="1">Cell membrane</location>
        <topology evidence="1">Multi-pass membrane protein</topology>
    </subcellularLocation>
</comment>
<comment type="similarity">
    <text evidence="1">Belongs to the PlsY family.</text>
</comment>
<comment type="sequence caution" evidence="2">
    <conflict type="erroneous initiation">
        <sequence resource="EMBL-CDS" id="AAT86862"/>
    </conflict>
</comment>
<sequence>MKLLLFITIAYLLGSIPTGLWIGQYFYHINLREHGSGNTGTTNTFRILGVKAGTATLAIDMFKGTLSILLPIIFGMTSISSIAIGFFAVLGHTFPIFANFKGGKAVATSAGVLLGFAPLYLFFLASIFVLVLYLFSMISLASVVSAIVGVLSVLTFPAIHFLLPNYDYFLTFIVILLAFIIIIRHKDNISRIKHHTENLIPWGLNLSKQVPKK</sequence>
<protein>
    <recommendedName>
        <fullName evidence="1">Glycerol-3-phosphate acyltransferase</fullName>
    </recommendedName>
    <alternativeName>
        <fullName evidence="1">Acyl-PO4 G3P acyltransferase</fullName>
    </alternativeName>
    <alternativeName>
        <fullName evidence="1">Acyl-phosphate--glycerol-3-phosphate acyltransferase</fullName>
    </alternativeName>
    <alternativeName>
        <fullName evidence="1">G3P acyltransferase</fullName>
        <shortName evidence="1">GPAT</shortName>
        <ecNumber evidence="1">2.3.1.275</ecNumber>
    </alternativeName>
    <alternativeName>
        <fullName evidence="1">Lysophosphatidic acid synthase</fullName>
        <shortName evidence="1">LPA synthase</shortName>
    </alternativeName>
</protein>
<gene>
    <name evidence="1" type="primary">plsY</name>
    <name type="ordered locus">M6_Spy0727</name>
</gene>
<evidence type="ECO:0000255" key="1">
    <source>
        <dbReference type="HAMAP-Rule" id="MF_01043"/>
    </source>
</evidence>
<evidence type="ECO:0000305" key="2"/>
<keyword id="KW-1003">Cell membrane</keyword>
<keyword id="KW-0444">Lipid biosynthesis</keyword>
<keyword id="KW-0443">Lipid metabolism</keyword>
<keyword id="KW-0472">Membrane</keyword>
<keyword id="KW-0594">Phospholipid biosynthesis</keyword>
<keyword id="KW-1208">Phospholipid metabolism</keyword>
<keyword id="KW-0808">Transferase</keyword>
<keyword id="KW-0812">Transmembrane</keyword>
<keyword id="KW-1133">Transmembrane helix</keyword>
<reference key="1">
    <citation type="journal article" date="2004" name="J. Infect. Dis.">
        <title>Progress toward characterization of the group A Streptococcus metagenome: complete genome sequence of a macrolide-resistant serotype M6 strain.</title>
        <authorList>
            <person name="Banks D.J."/>
            <person name="Porcella S.F."/>
            <person name="Barbian K.D."/>
            <person name="Beres S.B."/>
            <person name="Philips L.E."/>
            <person name="Voyich J.M."/>
            <person name="DeLeo F.R."/>
            <person name="Martin J.M."/>
            <person name="Somerville G.A."/>
            <person name="Musser J.M."/>
        </authorList>
    </citation>
    <scope>NUCLEOTIDE SEQUENCE [LARGE SCALE GENOMIC DNA]</scope>
    <source>
        <strain>ATCC BAA-946 / MGAS10394</strain>
    </source>
</reference>
<accession>Q5XCK1</accession>
<organism>
    <name type="scientific">Streptococcus pyogenes serotype M6 (strain ATCC BAA-946 / MGAS10394)</name>
    <dbReference type="NCBI Taxonomy" id="286636"/>
    <lineage>
        <taxon>Bacteria</taxon>
        <taxon>Bacillati</taxon>
        <taxon>Bacillota</taxon>
        <taxon>Bacilli</taxon>
        <taxon>Lactobacillales</taxon>
        <taxon>Streptococcaceae</taxon>
        <taxon>Streptococcus</taxon>
    </lineage>
</organism>
<dbReference type="EC" id="2.3.1.275" evidence="1"/>
<dbReference type="EMBL" id="CP000003">
    <property type="protein sequence ID" value="AAT86862.1"/>
    <property type="status" value="ALT_INIT"/>
    <property type="molecule type" value="Genomic_DNA"/>
</dbReference>
<dbReference type="RefSeq" id="WP_002984911.1">
    <property type="nucleotide sequence ID" value="NC_006086.1"/>
</dbReference>
<dbReference type="SMR" id="Q5XCK1"/>
<dbReference type="GeneID" id="69900991"/>
<dbReference type="KEGG" id="spa:M6_Spy0727"/>
<dbReference type="HOGENOM" id="CLU_081254_4_0_9"/>
<dbReference type="UniPathway" id="UPA00085"/>
<dbReference type="Proteomes" id="UP000001167">
    <property type="component" value="Chromosome"/>
</dbReference>
<dbReference type="GO" id="GO:0005886">
    <property type="term" value="C:plasma membrane"/>
    <property type="evidence" value="ECO:0007669"/>
    <property type="project" value="UniProtKB-SubCell"/>
</dbReference>
<dbReference type="GO" id="GO:0043772">
    <property type="term" value="F:acyl-phosphate glycerol-3-phosphate acyltransferase activity"/>
    <property type="evidence" value="ECO:0007669"/>
    <property type="project" value="UniProtKB-UniRule"/>
</dbReference>
<dbReference type="GO" id="GO:0008654">
    <property type="term" value="P:phospholipid biosynthetic process"/>
    <property type="evidence" value="ECO:0007669"/>
    <property type="project" value="UniProtKB-UniRule"/>
</dbReference>
<dbReference type="HAMAP" id="MF_01043">
    <property type="entry name" value="PlsY"/>
    <property type="match status" value="1"/>
</dbReference>
<dbReference type="InterPro" id="IPR003811">
    <property type="entry name" value="G3P_acylTferase_PlsY"/>
</dbReference>
<dbReference type="NCBIfam" id="TIGR00023">
    <property type="entry name" value="glycerol-3-phosphate 1-O-acyltransferase PlsY"/>
    <property type="match status" value="1"/>
</dbReference>
<dbReference type="PANTHER" id="PTHR30309:SF0">
    <property type="entry name" value="GLYCEROL-3-PHOSPHATE ACYLTRANSFERASE-RELATED"/>
    <property type="match status" value="1"/>
</dbReference>
<dbReference type="PANTHER" id="PTHR30309">
    <property type="entry name" value="INNER MEMBRANE PROTEIN YGIH"/>
    <property type="match status" value="1"/>
</dbReference>
<dbReference type="Pfam" id="PF02660">
    <property type="entry name" value="G3P_acyltransf"/>
    <property type="match status" value="1"/>
</dbReference>
<dbReference type="SMART" id="SM01207">
    <property type="entry name" value="G3P_acyltransf"/>
    <property type="match status" value="1"/>
</dbReference>
<proteinExistence type="inferred from homology"/>